<accession>Q12JH7</accession>
<proteinExistence type="inferred from homology"/>
<dbReference type="EC" id="2.7.7.-" evidence="1"/>
<dbReference type="EC" id="2.7.7.108" evidence="1"/>
<dbReference type="EMBL" id="CP000302">
    <property type="protein sequence ID" value="ABE56399.1"/>
    <property type="molecule type" value="Genomic_DNA"/>
</dbReference>
<dbReference type="RefSeq" id="WP_011497544.1">
    <property type="nucleotide sequence ID" value="NC_007954.1"/>
</dbReference>
<dbReference type="SMR" id="Q12JH7"/>
<dbReference type="STRING" id="318161.Sden_3122"/>
<dbReference type="DNASU" id="4019648"/>
<dbReference type="KEGG" id="sdn:Sden_3122"/>
<dbReference type="eggNOG" id="COG0397">
    <property type="taxonomic scope" value="Bacteria"/>
</dbReference>
<dbReference type="HOGENOM" id="CLU_010245_4_1_6"/>
<dbReference type="OrthoDB" id="9776281at2"/>
<dbReference type="Proteomes" id="UP000001982">
    <property type="component" value="Chromosome"/>
</dbReference>
<dbReference type="GO" id="GO:0070733">
    <property type="term" value="F:AMPylase activity"/>
    <property type="evidence" value="ECO:0007669"/>
    <property type="project" value="RHEA"/>
</dbReference>
<dbReference type="GO" id="GO:0005524">
    <property type="term" value="F:ATP binding"/>
    <property type="evidence" value="ECO:0007669"/>
    <property type="project" value="UniProtKB-UniRule"/>
</dbReference>
<dbReference type="GO" id="GO:0000287">
    <property type="term" value="F:magnesium ion binding"/>
    <property type="evidence" value="ECO:0007669"/>
    <property type="project" value="UniProtKB-UniRule"/>
</dbReference>
<dbReference type="HAMAP" id="MF_00692">
    <property type="entry name" value="YdiU_SelO"/>
    <property type="match status" value="1"/>
</dbReference>
<dbReference type="InterPro" id="IPR003846">
    <property type="entry name" value="SelO"/>
</dbReference>
<dbReference type="NCBIfam" id="NF000658">
    <property type="entry name" value="PRK00029.1"/>
    <property type="match status" value="1"/>
</dbReference>
<dbReference type="PANTHER" id="PTHR32057">
    <property type="entry name" value="PROTEIN ADENYLYLTRANSFERASE SELO, MITOCHONDRIAL"/>
    <property type="match status" value="1"/>
</dbReference>
<dbReference type="PANTHER" id="PTHR32057:SF14">
    <property type="entry name" value="PROTEIN ADENYLYLTRANSFERASE SELO, MITOCHONDRIAL"/>
    <property type="match status" value="1"/>
</dbReference>
<dbReference type="Pfam" id="PF02696">
    <property type="entry name" value="SelO"/>
    <property type="match status" value="1"/>
</dbReference>
<evidence type="ECO:0000255" key="1">
    <source>
        <dbReference type="HAMAP-Rule" id="MF_00692"/>
    </source>
</evidence>
<evidence type="ECO:0000256" key="2">
    <source>
        <dbReference type="SAM" id="MobiDB-lite"/>
    </source>
</evidence>
<sequence>MDAPSRSHLASPILVANYRSLPSFMYRDSLPEAAVSPQLLALNTRLLETLEQDLAWFNSSDALEQLSGKTYYGSNLPFALAYSGHQFGGWSPVLGDGRAHVLGQLKTAADELIDVQLKGSGATPFSRGGDGRATLGAVIREYLLSEAMAGLNISTTGSLAVIATGEDVWRNGAYPGAILVRTAKSHLRVGSFQYAAVHQGPEAVKTLADFALAQYYPELSHDENPYQALLAQVIKGQAELVAQWMLVGFIHGVMNTDNSSITGETIDYGPCAFMDEFNPNKVFSSIDSQGRYAWGNQGAIAQWNMARLGETLLPLLDSDEAKALEIAQAQLGDFNRLFAEHFYQGMARKLSLDASDPELIPFVDSTLQLMTNTRVDFCQFFNALTEYHSTHREQDAGLVALFSTEAFPSLSSTPAQLLQDWLSQWQAKACDSQAALAAMIKANPKFIARNHKVEAAISAAEQNNDYSLFLDMARVLANPYVLAEQDKHYQDAPTPDQRVKQTFCGT</sequence>
<organism>
    <name type="scientific">Shewanella denitrificans (strain OS217 / ATCC BAA-1090 / DSM 15013)</name>
    <dbReference type="NCBI Taxonomy" id="318161"/>
    <lineage>
        <taxon>Bacteria</taxon>
        <taxon>Pseudomonadati</taxon>
        <taxon>Pseudomonadota</taxon>
        <taxon>Gammaproteobacteria</taxon>
        <taxon>Alteromonadales</taxon>
        <taxon>Shewanellaceae</taxon>
        <taxon>Shewanella</taxon>
    </lineage>
</organism>
<comment type="function">
    <text evidence="1">Nucleotidyltransferase involved in the post-translational modification of proteins. It can catalyze the addition of adenosine monophosphate (AMP) or uridine monophosphate (UMP) to a protein, resulting in modifications known as AMPylation and UMPylation.</text>
</comment>
<comment type="catalytic activity">
    <reaction evidence="1">
        <text>L-seryl-[protein] + ATP = 3-O-(5'-adenylyl)-L-seryl-[protein] + diphosphate</text>
        <dbReference type="Rhea" id="RHEA:58120"/>
        <dbReference type="Rhea" id="RHEA-COMP:9863"/>
        <dbReference type="Rhea" id="RHEA-COMP:15073"/>
        <dbReference type="ChEBI" id="CHEBI:29999"/>
        <dbReference type="ChEBI" id="CHEBI:30616"/>
        <dbReference type="ChEBI" id="CHEBI:33019"/>
        <dbReference type="ChEBI" id="CHEBI:142516"/>
        <dbReference type="EC" id="2.7.7.108"/>
    </reaction>
</comment>
<comment type="catalytic activity">
    <reaction evidence="1">
        <text>L-threonyl-[protein] + ATP = 3-O-(5'-adenylyl)-L-threonyl-[protein] + diphosphate</text>
        <dbReference type="Rhea" id="RHEA:54292"/>
        <dbReference type="Rhea" id="RHEA-COMP:11060"/>
        <dbReference type="Rhea" id="RHEA-COMP:13847"/>
        <dbReference type="ChEBI" id="CHEBI:30013"/>
        <dbReference type="ChEBI" id="CHEBI:30616"/>
        <dbReference type="ChEBI" id="CHEBI:33019"/>
        <dbReference type="ChEBI" id="CHEBI:138113"/>
        <dbReference type="EC" id="2.7.7.108"/>
    </reaction>
</comment>
<comment type="catalytic activity">
    <reaction evidence="1">
        <text>L-tyrosyl-[protein] + ATP = O-(5'-adenylyl)-L-tyrosyl-[protein] + diphosphate</text>
        <dbReference type="Rhea" id="RHEA:54288"/>
        <dbReference type="Rhea" id="RHEA-COMP:10136"/>
        <dbReference type="Rhea" id="RHEA-COMP:13846"/>
        <dbReference type="ChEBI" id="CHEBI:30616"/>
        <dbReference type="ChEBI" id="CHEBI:33019"/>
        <dbReference type="ChEBI" id="CHEBI:46858"/>
        <dbReference type="ChEBI" id="CHEBI:83624"/>
        <dbReference type="EC" id="2.7.7.108"/>
    </reaction>
</comment>
<comment type="catalytic activity">
    <reaction evidence="1">
        <text>L-histidyl-[protein] + UTP = N(tele)-(5'-uridylyl)-L-histidyl-[protein] + diphosphate</text>
        <dbReference type="Rhea" id="RHEA:83891"/>
        <dbReference type="Rhea" id="RHEA-COMP:9745"/>
        <dbReference type="Rhea" id="RHEA-COMP:20239"/>
        <dbReference type="ChEBI" id="CHEBI:29979"/>
        <dbReference type="ChEBI" id="CHEBI:33019"/>
        <dbReference type="ChEBI" id="CHEBI:46398"/>
        <dbReference type="ChEBI" id="CHEBI:233474"/>
    </reaction>
</comment>
<comment type="catalytic activity">
    <reaction evidence="1">
        <text>L-seryl-[protein] + UTP = O-(5'-uridylyl)-L-seryl-[protein] + diphosphate</text>
        <dbReference type="Rhea" id="RHEA:64604"/>
        <dbReference type="Rhea" id="RHEA-COMP:9863"/>
        <dbReference type="Rhea" id="RHEA-COMP:16635"/>
        <dbReference type="ChEBI" id="CHEBI:29999"/>
        <dbReference type="ChEBI" id="CHEBI:33019"/>
        <dbReference type="ChEBI" id="CHEBI:46398"/>
        <dbReference type="ChEBI" id="CHEBI:156051"/>
    </reaction>
</comment>
<comment type="catalytic activity">
    <reaction evidence="1">
        <text>L-tyrosyl-[protein] + UTP = O-(5'-uridylyl)-L-tyrosyl-[protein] + diphosphate</text>
        <dbReference type="Rhea" id="RHEA:83887"/>
        <dbReference type="Rhea" id="RHEA-COMP:10136"/>
        <dbReference type="Rhea" id="RHEA-COMP:20238"/>
        <dbReference type="ChEBI" id="CHEBI:33019"/>
        <dbReference type="ChEBI" id="CHEBI:46398"/>
        <dbReference type="ChEBI" id="CHEBI:46858"/>
        <dbReference type="ChEBI" id="CHEBI:90602"/>
    </reaction>
</comment>
<comment type="cofactor">
    <cofactor evidence="1">
        <name>Mg(2+)</name>
        <dbReference type="ChEBI" id="CHEBI:18420"/>
    </cofactor>
    <cofactor evidence="1">
        <name>Mn(2+)</name>
        <dbReference type="ChEBI" id="CHEBI:29035"/>
    </cofactor>
</comment>
<comment type="similarity">
    <text evidence="1">Belongs to the SELO family.</text>
</comment>
<reference key="1">
    <citation type="submission" date="2006-03" db="EMBL/GenBank/DDBJ databases">
        <title>Complete sequence of Shewanella denitrificans OS217.</title>
        <authorList>
            <consortium name="US DOE Joint Genome Institute"/>
            <person name="Copeland A."/>
            <person name="Lucas S."/>
            <person name="Lapidus A."/>
            <person name="Barry K."/>
            <person name="Detter J.C."/>
            <person name="Glavina del Rio T."/>
            <person name="Hammon N."/>
            <person name="Israni S."/>
            <person name="Dalin E."/>
            <person name="Tice H."/>
            <person name="Pitluck S."/>
            <person name="Brettin T."/>
            <person name="Bruce D."/>
            <person name="Han C."/>
            <person name="Tapia R."/>
            <person name="Gilna P."/>
            <person name="Kiss H."/>
            <person name="Schmutz J."/>
            <person name="Larimer F."/>
            <person name="Land M."/>
            <person name="Hauser L."/>
            <person name="Kyrpides N."/>
            <person name="Lykidis A."/>
            <person name="Richardson P."/>
        </authorList>
    </citation>
    <scope>NUCLEOTIDE SEQUENCE [LARGE SCALE GENOMIC DNA]</scope>
    <source>
        <strain>OS217 / ATCC BAA-1090 / DSM 15013</strain>
    </source>
</reference>
<name>SELO_SHEDO</name>
<feature type="chain" id="PRO_0000271865" description="Protein nucleotidyltransferase YdiU">
    <location>
        <begin position="1"/>
        <end position="506"/>
    </location>
</feature>
<feature type="region of interest" description="Disordered" evidence="2">
    <location>
        <begin position="487"/>
        <end position="506"/>
    </location>
</feature>
<feature type="active site" description="Proton acceptor" evidence="1">
    <location>
        <position position="257"/>
    </location>
</feature>
<feature type="binding site" evidence="1">
    <location>
        <position position="95"/>
    </location>
    <ligand>
        <name>ATP</name>
        <dbReference type="ChEBI" id="CHEBI:30616"/>
    </ligand>
</feature>
<feature type="binding site" evidence="1">
    <location>
        <position position="97"/>
    </location>
    <ligand>
        <name>ATP</name>
        <dbReference type="ChEBI" id="CHEBI:30616"/>
    </ligand>
</feature>
<feature type="binding site" evidence="1">
    <location>
        <position position="98"/>
    </location>
    <ligand>
        <name>ATP</name>
        <dbReference type="ChEBI" id="CHEBI:30616"/>
    </ligand>
</feature>
<feature type="binding site" evidence="1">
    <location>
        <position position="118"/>
    </location>
    <ligand>
        <name>ATP</name>
        <dbReference type="ChEBI" id="CHEBI:30616"/>
    </ligand>
</feature>
<feature type="binding site" evidence="1">
    <location>
        <position position="130"/>
    </location>
    <ligand>
        <name>ATP</name>
        <dbReference type="ChEBI" id="CHEBI:30616"/>
    </ligand>
</feature>
<feature type="binding site" evidence="1">
    <location>
        <position position="131"/>
    </location>
    <ligand>
        <name>ATP</name>
        <dbReference type="ChEBI" id="CHEBI:30616"/>
    </ligand>
</feature>
<feature type="binding site" evidence="1">
    <location>
        <position position="181"/>
    </location>
    <ligand>
        <name>ATP</name>
        <dbReference type="ChEBI" id="CHEBI:30616"/>
    </ligand>
</feature>
<feature type="binding site" evidence="1">
    <location>
        <position position="188"/>
    </location>
    <ligand>
        <name>ATP</name>
        <dbReference type="ChEBI" id="CHEBI:30616"/>
    </ligand>
</feature>
<feature type="binding site" evidence="1">
    <location>
        <position position="258"/>
    </location>
    <ligand>
        <name>Mg(2+)</name>
        <dbReference type="ChEBI" id="CHEBI:18420"/>
    </ligand>
</feature>
<feature type="binding site" evidence="1">
    <location>
        <position position="267"/>
    </location>
    <ligand>
        <name>ATP</name>
        <dbReference type="ChEBI" id="CHEBI:30616"/>
    </ligand>
</feature>
<feature type="binding site" evidence="1">
    <location>
        <position position="267"/>
    </location>
    <ligand>
        <name>Mg(2+)</name>
        <dbReference type="ChEBI" id="CHEBI:18420"/>
    </ligand>
</feature>
<gene>
    <name evidence="1" type="primary">ydiU</name>
    <name evidence="1" type="synonym">selO</name>
    <name type="ordered locus">Sden_3122</name>
</gene>
<protein>
    <recommendedName>
        <fullName evidence="1">Protein nucleotidyltransferase YdiU</fullName>
        <ecNumber evidence="1">2.7.7.-</ecNumber>
    </recommendedName>
    <alternativeName>
        <fullName evidence="1">Protein adenylyltransferase YdiU</fullName>
        <ecNumber evidence="1">2.7.7.108</ecNumber>
    </alternativeName>
    <alternativeName>
        <fullName evidence="1">Protein uridylyltransferase YdiU</fullName>
        <ecNumber evidence="1">2.7.7.-</ecNumber>
    </alternativeName>
</protein>
<keyword id="KW-0067">ATP-binding</keyword>
<keyword id="KW-0460">Magnesium</keyword>
<keyword id="KW-0464">Manganese</keyword>
<keyword id="KW-0479">Metal-binding</keyword>
<keyword id="KW-0547">Nucleotide-binding</keyword>
<keyword id="KW-0548">Nucleotidyltransferase</keyword>
<keyword id="KW-1185">Reference proteome</keyword>
<keyword id="KW-0808">Transferase</keyword>